<name>TRUB_SHEPA</name>
<keyword id="KW-0413">Isomerase</keyword>
<keyword id="KW-1185">Reference proteome</keyword>
<keyword id="KW-0819">tRNA processing</keyword>
<sequence length="315" mass="35039">MARRSRGRFIDGIVLLDKDTGMSSNFALQRVKRFFNANKAGHTGALDPLATGMLPICLGEATKFSQHLLDADKRYLVTAKLGQRTDTSDSDGEIVQTREVNFTQEQLDTALEYFRGETMQVPSMYSALKYQGQPLYKYAREGIEVPREARPINVFELNFISLEGDELTLDIHCSKGTYIRTITDDLGEMLGCGAHVIMLRRTQVAGYPYDKMVSLKQLEELVAKADAESLTLSEVLDPLLLPMDTAVSGFKEINVSDELATYLMNGNPVQVANLPVDELVRITIGDARQFVGIGQMNDDGLLAPKRLIVLREPQD</sequence>
<organism>
    <name type="scientific">Shewanella pealeana (strain ATCC 700345 / ANG-SQ1)</name>
    <dbReference type="NCBI Taxonomy" id="398579"/>
    <lineage>
        <taxon>Bacteria</taxon>
        <taxon>Pseudomonadati</taxon>
        <taxon>Pseudomonadota</taxon>
        <taxon>Gammaproteobacteria</taxon>
        <taxon>Alteromonadales</taxon>
        <taxon>Shewanellaceae</taxon>
        <taxon>Shewanella</taxon>
    </lineage>
</organism>
<comment type="function">
    <text evidence="1">Responsible for synthesis of pseudouridine from uracil-55 in the psi GC loop of transfer RNAs.</text>
</comment>
<comment type="catalytic activity">
    <reaction evidence="1">
        <text>uridine(55) in tRNA = pseudouridine(55) in tRNA</text>
        <dbReference type="Rhea" id="RHEA:42532"/>
        <dbReference type="Rhea" id="RHEA-COMP:10101"/>
        <dbReference type="Rhea" id="RHEA-COMP:10102"/>
        <dbReference type="ChEBI" id="CHEBI:65314"/>
        <dbReference type="ChEBI" id="CHEBI:65315"/>
        <dbReference type="EC" id="5.4.99.25"/>
    </reaction>
</comment>
<comment type="similarity">
    <text evidence="1">Belongs to the pseudouridine synthase TruB family. Type 1 subfamily.</text>
</comment>
<accession>A8H738</accession>
<dbReference type="EC" id="5.4.99.25" evidence="1"/>
<dbReference type="EMBL" id="CP000851">
    <property type="protein sequence ID" value="ABV88375.1"/>
    <property type="molecule type" value="Genomic_DNA"/>
</dbReference>
<dbReference type="RefSeq" id="WP_012156279.1">
    <property type="nucleotide sequence ID" value="NC_009901.1"/>
</dbReference>
<dbReference type="SMR" id="A8H738"/>
<dbReference type="STRING" id="398579.Spea_3058"/>
<dbReference type="KEGG" id="spl:Spea_3058"/>
<dbReference type="eggNOG" id="COG0130">
    <property type="taxonomic scope" value="Bacteria"/>
</dbReference>
<dbReference type="HOGENOM" id="CLU_032087_0_3_6"/>
<dbReference type="OrthoDB" id="9802309at2"/>
<dbReference type="Proteomes" id="UP000002608">
    <property type="component" value="Chromosome"/>
</dbReference>
<dbReference type="GO" id="GO:0003723">
    <property type="term" value="F:RNA binding"/>
    <property type="evidence" value="ECO:0007669"/>
    <property type="project" value="InterPro"/>
</dbReference>
<dbReference type="GO" id="GO:0160148">
    <property type="term" value="F:tRNA pseudouridine(55) synthase activity"/>
    <property type="evidence" value="ECO:0007669"/>
    <property type="project" value="UniProtKB-EC"/>
</dbReference>
<dbReference type="GO" id="GO:1990481">
    <property type="term" value="P:mRNA pseudouridine synthesis"/>
    <property type="evidence" value="ECO:0007669"/>
    <property type="project" value="TreeGrafter"/>
</dbReference>
<dbReference type="GO" id="GO:0031119">
    <property type="term" value="P:tRNA pseudouridine synthesis"/>
    <property type="evidence" value="ECO:0007669"/>
    <property type="project" value="UniProtKB-UniRule"/>
</dbReference>
<dbReference type="CDD" id="cd02573">
    <property type="entry name" value="PseudoU_synth_EcTruB"/>
    <property type="match status" value="1"/>
</dbReference>
<dbReference type="CDD" id="cd21152">
    <property type="entry name" value="PUA_TruB_bacterial"/>
    <property type="match status" value="1"/>
</dbReference>
<dbReference type="FunFam" id="2.30.130.10:FF:000004">
    <property type="entry name" value="tRNA pseudouridine synthase B"/>
    <property type="match status" value="1"/>
</dbReference>
<dbReference type="FunFam" id="3.30.2350.10:FF:000003">
    <property type="entry name" value="tRNA pseudouridine synthase B"/>
    <property type="match status" value="1"/>
</dbReference>
<dbReference type="Gene3D" id="3.30.2350.10">
    <property type="entry name" value="Pseudouridine synthase"/>
    <property type="match status" value="1"/>
</dbReference>
<dbReference type="Gene3D" id="2.30.130.10">
    <property type="entry name" value="PUA domain"/>
    <property type="match status" value="1"/>
</dbReference>
<dbReference type="HAMAP" id="MF_01080">
    <property type="entry name" value="TruB_bact"/>
    <property type="match status" value="1"/>
</dbReference>
<dbReference type="InterPro" id="IPR020103">
    <property type="entry name" value="PsdUridine_synth_cat_dom_sf"/>
</dbReference>
<dbReference type="InterPro" id="IPR002501">
    <property type="entry name" value="PsdUridine_synth_N"/>
</dbReference>
<dbReference type="InterPro" id="IPR015947">
    <property type="entry name" value="PUA-like_sf"/>
</dbReference>
<dbReference type="InterPro" id="IPR036974">
    <property type="entry name" value="PUA_sf"/>
</dbReference>
<dbReference type="InterPro" id="IPR014780">
    <property type="entry name" value="tRNA_psdUridine_synth_TruB"/>
</dbReference>
<dbReference type="InterPro" id="IPR015240">
    <property type="entry name" value="tRNA_sdUridine_synth_fam1_C"/>
</dbReference>
<dbReference type="InterPro" id="IPR032819">
    <property type="entry name" value="TruB_C"/>
</dbReference>
<dbReference type="NCBIfam" id="TIGR00431">
    <property type="entry name" value="TruB"/>
    <property type="match status" value="1"/>
</dbReference>
<dbReference type="PANTHER" id="PTHR13767:SF2">
    <property type="entry name" value="PSEUDOURIDYLATE SYNTHASE TRUB1"/>
    <property type="match status" value="1"/>
</dbReference>
<dbReference type="PANTHER" id="PTHR13767">
    <property type="entry name" value="TRNA-PSEUDOURIDINE SYNTHASE"/>
    <property type="match status" value="1"/>
</dbReference>
<dbReference type="Pfam" id="PF09157">
    <property type="entry name" value="TruB-C_2"/>
    <property type="match status" value="1"/>
</dbReference>
<dbReference type="Pfam" id="PF16198">
    <property type="entry name" value="TruB_C_2"/>
    <property type="match status" value="1"/>
</dbReference>
<dbReference type="Pfam" id="PF01509">
    <property type="entry name" value="TruB_N"/>
    <property type="match status" value="1"/>
</dbReference>
<dbReference type="SUPFAM" id="SSF55120">
    <property type="entry name" value="Pseudouridine synthase"/>
    <property type="match status" value="1"/>
</dbReference>
<dbReference type="SUPFAM" id="SSF88697">
    <property type="entry name" value="PUA domain-like"/>
    <property type="match status" value="1"/>
</dbReference>
<gene>
    <name evidence="1" type="primary">truB</name>
    <name type="ordered locus">Spea_3058</name>
</gene>
<protein>
    <recommendedName>
        <fullName evidence="1">tRNA pseudouridine synthase B</fullName>
        <ecNumber evidence="1">5.4.99.25</ecNumber>
    </recommendedName>
    <alternativeName>
        <fullName evidence="1">tRNA pseudouridine(55) synthase</fullName>
        <shortName evidence="1">Psi55 synthase</shortName>
    </alternativeName>
    <alternativeName>
        <fullName evidence="1">tRNA pseudouridylate synthase</fullName>
    </alternativeName>
    <alternativeName>
        <fullName evidence="1">tRNA-uridine isomerase</fullName>
    </alternativeName>
</protein>
<feature type="chain" id="PRO_1000084677" description="tRNA pseudouridine synthase B">
    <location>
        <begin position="1"/>
        <end position="315"/>
    </location>
</feature>
<feature type="active site" description="Nucleophile" evidence="1">
    <location>
        <position position="47"/>
    </location>
</feature>
<reference key="1">
    <citation type="submission" date="2007-10" db="EMBL/GenBank/DDBJ databases">
        <title>Complete sequence of Shewanella pealeana ATCC 700345.</title>
        <authorList>
            <consortium name="US DOE Joint Genome Institute"/>
            <person name="Copeland A."/>
            <person name="Lucas S."/>
            <person name="Lapidus A."/>
            <person name="Barry K."/>
            <person name="Glavina del Rio T."/>
            <person name="Dalin E."/>
            <person name="Tice H."/>
            <person name="Pitluck S."/>
            <person name="Chertkov O."/>
            <person name="Brettin T."/>
            <person name="Bruce D."/>
            <person name="Detter J.C."/>
            <person name="Han C."/>
            <person name="Schmutz J."/>
            <person name="Larimer F."/>
            <person name="Land M."/>
            <person name="Hauser L."/>
            <person name="Kyrpides N."/>
            <person name="Kim E."/>
            <person name="Zhao J.-S.Z."/>
            <person name="Manno D."/>
            <person name="Hawari J."/>
            <person name="Richardson P."/>
        </authorList>
    </citation>
    <scope>NUCLEOTIDE SEQUENCE [LARGE SCALE GENOMIC DNA]</scope>
    <source>
        <strain>ATCC 700345 / ANG-SQ1</strain>
    </source>
</reference>
<proteinExistence type="inferred from homology"/>
<evidence type="ECO:0000255" key="1">
    <source>
        <dbReference type="HAMAP-Rule" id="MF_01080"/>
    </source>
</evidence>